<proteinExistence type="inferred from homology"/>
<evidence type="ECO:0000255" key="1">
    <source>
        <dbReference type="HAMAP-Rule" id="MF_00040"/>
    </source>
</evidence>
<dbReference type="EMBL" id="AM920689">
    <property type="protein sequence ID" value="CAP52287.1"/>
    <property type="molecule type" value="Genomic_DNA"/>
</dbReference>
<dbReference type="SMR" id="B0RW69"/>
<dbReference type="KEGG" id="xca:xcc-b100_2926"/>
<dbReference type="HOGENOM" id="CLU_073981_2_0_6"/>
<dbReference type="Proteomes" id="UP000001188">
    <property type="component" value="Chromosome"/>
</dbReference>
<dbReference type="GO" id="GO:0005829">
    <property type="term" value="C:cytosol"/>
    <property type="evidence" value="ECO:0007669"/>
    <property type="project" value="GOC"/>
</dbReference>
<dbReference type="GO" id="GO:0043023">
    <property type="term" value="F:ribosomal large subunit binding"/>
    <property type="evidence" value="ECO:0007669"/>
    <property type="project" value="TreeGrafter"/>
</dbReference>
<dbReference type="GO" id="GO:0002184">
    <property type="term" value="P:cytoplasmic translational termination"/>
    <property type="evidence" value="ECO:0007669"/>
    <property type="project" value="TreeGrafter"/>
</dbReference>
<dbReference type="CDD" id="cd00520">
    <property type="entry name" value="RRF"/>
    <property type="match status" value="1"/>
</dbReference>
<dbReference type="FunFam" id="1.10.132.20:FF:000001">
    <property type="entry name" value="Ribosome-recycling factor"/>
    <property type="match status" value="1"/>
</dbReference>
<dbReference type="FunFam" id="3.30.1360.40:FF:000001">
    <property type="entry name" value="Ribosome-recycling factor"/>
    <property type="match status" value="1"/>
</dbReference>
<dbReference type="Gene3D" id="3.30.1360.40">
    <property type="match status" value="1"/>
</dbReference>
<dbReference type="Gene3D" id="1.10.132.20">
    <property type="entry name" value="Ribosome-recycling factor"/>
    <property type="match status" value="1"/>
</dbReference>
<dbReference type="HAMAP" id="MF_00040">
    <property type="entry name" value="RRF"/>
    <property type="match status" value="1"/>
</dbReference>
<dbReference type="InterPro" id="IPR002661">
    <property type="entry name" value="Ribosome_recyc_fac"/>
</dbReference>
<dbReference type="InterPro" id="IPR023584">
    <property type="entry name" value="Ribosome_recyc_fac_dom"/>
</dbReference>
<dbReference type="InterPro" id="IPR036191">
    <property type="entry name" value="RRF_sf"/>
</dbReference>
<dbReference type="NCBIfam" id="TIGR00496">
    <property type="entry name" value="frr"/>
    <property type="match status" value="1"/>
</dbReference>
<dbReference type="PANTHER" id="PTHR20982:SF3">
    <property type="entry name" value="MITOCHONDRIAL RIBOSOME RECYCLING FACTOR PSEUDO 1"/>
    <property type="match status" value="1"/>
</dbReference>
<dbReference type="PANTHER" id="PTHR20982">
    <property type="entry name" value="RIBOSOME RECYCLING FACTOR"/>
    <property type="match status" value="1"/>
</dbReference>
<dbReference type="Pfam" id="PF01765">
    <property type="entry name" value="RRF"/>
    <property type="match status" value="1"/>
</dbReference>
<dbReference type="SUPFAM" id="SSF55194">
    <property type="entry name" value="Ribosome recycling factor, RRF"/>
    <property type="match status" value="1"/>
</dbReference>
<sequence length="185" mass="20449">MLNQIKQDAQTRMTKSIDALRHSLTTVRTGRASPALLDNIKVKAYGTDTPLNQVASISVSEGRSLVISLFDKGMIKDVEKAIYASDLGLTPTVVGTVIRLNLPPLTEERRKELSKSVHGEGEDAKVAIRNIRRDANQQVKDLLKDKQVTEDEARGAEDDIQKLTDKAIKDVDEVVKGKEQELMTV</sequence>
<reference key="1">
    <citation type="journal article" date="2008" name="J. Biotechnol.">
        <title>The genome of Xanthomonas campestris pv. campestris B100 and its use for the reconstruction of metabolic pathways involved in xanthan biosynthesis.</title>
        <authorList>
            <person name="Vorhoelter F.-J."/>
            <person name="Schneiker S."/>
            <person name="Goesmann A."/>
            <person name="Krause L."/>
            <person name="Bekel T."/>
            <person name="Kaiser O."/>
            <person name="Linke B."/>
            <person name="Patschkowski T."/>
            <person name="Rueckert C."/>
            <person name="Schmid J."/>
            <person name="Sidhu V.K."/>
            <person name="Sieber V."/>
            <person name="Tauch A."/>
            <person name="Watt S.A."/>
            <person name="Weisshaar B."/>
            <person name="Becker A."/>
            <person name="Niehaus K."/>
            <person name="Puehler A."/>
        </authorList>
    </citation>
    <scope>NUCLEOTIDE SEQUENCE [LARGE SCALE GENOMIC DNA]</scope>
    <source>
        <strain>B100</strain>
    </source>
</reference>
<accession>B0RW69</accession>
<name>RRF_XANCB</name>
<keyword id="KW-0963">Cytoplasm</keyword>
<keyword id="KW-0648">Protein biosynthesis</keyword>
<protein>
    <recommendedName>
        <fullName evidence="1">Ribosome-recycling factor</fullName>
        <shortName evidence="1">RRF</shortName>
    </recommendedName>
    <alternativeName>
        <fullName evidence="1">Ribosome-releasing factor</fullName>
    </alternativeName>
</protein>
<gene>
    <name evidence="1" type="primary">frr</name>
    <name type="ordered locus">xcc-b100_2926</name>
</gene>
<feature type="chain" id="PRO_1000090803" description="Ribosome-recycling factor">
    <location>
        <begin position="1"/>
        <end position="185"/>
    </location>
</feature>
<organism>
    <name type="scientific">Xanthomonas campestris pv. campestris (strain B100)</name>
    <dbReference type="NCBI Taxonomy" id="509169"/>
    <lineage>
        <taxon>Bacteria</taxon>
        <taxon>Pseudomonadati</taxon>
        <taxon>Pseudomonadota</taxon>
        <taxon>Gammaproteobacteria</taxon>
        <taxon>Lysobacterales</taxon>
        <taxon>Lysobacteraceae</taxon>
        <taxon>Xanthomonas</taxon>
    </lineage>
</organism>
<comment type="function">
    <text evidence="1">Responsible for the release of ribosomes from messenger RNA at the termination of protein biosynthesis. May increase the efficiency of translation by recycling ribosomes from one round of translation to another.</text>
</comment>
<comment type="subcellular location">
    <subcellularLocation>
        <location evidence="1">Cytoplasm</location>
    </subcellularLocation>
</comment>
<comment type="similarity">
    <text evidence="1">Belongs to the RRF family.</text>
</comment>